<comment type="function">
    <text evidence="1">Specifically dimethylates two adjacent adenosines (A1518 and A1519) in the loop of a conserved hairpin near the 3'-end of 16S rRNA in the 30S particle. May play a critical role in biogenesis of 30S subunits.</text>
</comment>
<comment type="catalytic activity">
    <reaction evidence="1">
        <text>adenosine(1518)/adenosine(1519) in 16S rRNA + 4 S-adenosyl-L-methionine = N(6)-dimethyladenosine(1518)/N(6)-dimethyladenosine(1519) in 16S rRNA + 4 S-adenosyl-L-homocysteine + 4 H(+)</text>
        <dbReference type="Rhea" id="RHEA:19609"/>
        <dbReference type="Rhea" id="RHEA-COMP:10232"/>
        <dbReference type="Rhea" id="RHEA-COMP:10233"/>
        <dbReference type="ChEBI" id="CHEBI:15378"/>
        <dbReference type="ChEBI" id="CHEBI:57856"/>
        <dbReference type="ChEBI" id="CHEBI:59789"/>
        <dbReference type="ChEBI" id="CHEBI:74411"/>
        <dbReference type="ChEBI" id="CHEBI:74493"/>
        <dbReference type="EC" id="2.1.1.182"/>
    </reaction>
</comment>
<comment type="subcellular location">
    <subcellularLocation>
        <location evidence="1">Cytoplasm</location>
    </subcellularLocation>
</comment>
<comment type="similarity">
    <text evidence="1">Belongs to the class I-like SAM-binding methyltransferase superfamily. rRNA adenine N(6)-methyltransferase family. RsmA subfamily.</text>
</comment>
<dbReference type="EC" id="2.1.1.182" evidence="1"/>
<dbReference type="EMBL" id="CP000853">
    <property type="protein sequence ID" value="ABW20188.1"/>
    <property type="molecule type" value="Genomic_DNA"/>
</dbReference>
<dbReference type="RefSeq" id="WP_012160495.1">
    <property type="nucleotide sequence ID" value="NC_009922.1"/>
</dbReference>
<dbReference type="SMR" id="A8MK56"/>
<dbReference type="STRING" id="350688.Clos_2657"/>
<dbReference type="KEGG" id="aoe:Clos_2657"/>
<dbReference type="eggNOG" id="COG0030">
    <property type="taxonomic scope" value="Bacteria"/>
</dbReference>
<dbReference type="HOGENOM" id="CLU_041220_0_0_9"/>
<dbReference type="OrthoDB" id="9814755at2"/>
<dbReference type="Proteomes" id="UP000000269">
    <property type="component" value="Chromosome"/>
</dbReference>
<dbReference type="GO" id="GO:0005829">
    <property type="term" value="C:cytosol"/>
    <property type="evidence" value="ECO:0007669"/>
    <property type="project" value="TreeGrafter"/>
</dbReference>
<dbReference type="GO" id="GO:0052908">
    <property type="term" value="F:16S rRNA (adenine(1518)-N(6)/adenine(1519)-N(6))-dimethyltransferase activity"/>
    <property type="evidence" value="ECO:0007669"/>
    <property type="project" value="UniProtKB-EC"/>
</dbReference>
<dbReference type="GO" id="GO:0003723">
    <property type="term" value="F:RNA binding"/>
    <property type="evidence" value="ECO:0007669"/>
    <property type="project" value="UniProtKB-KW"/>
</dbReference>
<dbReference type="FunFam" id="3.40.50.150:FF:000023">
    <property type="entry name" value="Ribosomal RNA small subunit methyltransferase A"/>
    <property type="match status" value="1"/>
</dbReference>
<dbReference type="Gene3D" id="1.10.8.100">
    <property type="entry name" value="Ribosomal RNA adenine dimethylase-like, domain 2"/>
    <property type="match status" value="1"/>
</dbReference>
<dbReference type="Gene3D" id="3.40.50.150">
    <property type="entry name" value="Vaccinia Virus protein VP39"/>
    <property type="match status" value="1"/>
</dbReference>
<dbReference type="HAMAP" id="MF_00607">
    <property type="entry name" value="16SrRNA_methyltr_A"/>
    <property type="match status" value="1"/>
</dbReference>
<dbReference type="InterPro" id="IPR001737">
    <property type="entry name" value="KsgA/Erm"/>
</dbReference>
<dbReference type="InterPro" id="IPR023165">
    <property type="entry name" value="rRNA_Ade_diMease-like_C"/>
</dbReference>
<dbReference type="InterPro" id="IPR020596">
    <property type="entry name" value="rRNA_Ade_Mease_Trfase_CS"/>
</dbReference>
<dbReference type="InterPro" id="IPR020598">
    <property type="entry name" value="rRNA_Ade_methylase_Trfase_N"/>
</dbReference>
<dbReference type="InterPro" id="IPR011530">
    <property type="entry name" value="rRNA_adenine_dimethylase"/>
</dbReference>
<dbReference type="InterPro" id="IPR029063">
    <property type="entry name" value="SAM-dependent_MTases_sf"/>
</dbReference>
<dbReference type="NCBIfam" id="TIGR00755">
    <property type="entry name" value="ksgA"/>
    <property type="match status" value="1"/>
</dbReference>
<dbReference type="PANTHER" id="PTHR11727">
    <property type="entry name" value="DIMETHYLADENOSINE TRANSFERASE"/>
    <property type="match status" value="1"/>
</dbReference>
<dbReference type="PANTHER" id="PTHR11727:SF7">
    <property type="entry name" value="DIMETHYLADENOSINE TRANSFERASE-RELATED"/>
    <property type="match status" value="1"/>
</dbReference>
<dbReference type="Pfam" id="PF00398">
    <property type="entry name" value="RrnaAD"/>
    <property type="match status" value="1"/>
</dbReference>
<dbReference type="SMART" id="SM00650">
    <property type="entry name" value="rADc"/>
    <property type="match status" value="1"/>
</dbReference>
<dbReference type="SUPFAM" id="SSF53335">
    <property type="entry name" value="S-adenosyl-L-methionine-dependent methyltransferases"/>
    <property type="match status" value="1"/>
</dbReference>
<dbReference type="PROSITE" id="PS01131">
    <property type="entry name" value="RRNA_A_DIMETH"/>
    <property type="match status" value="1"/>
</dbReference>
<dbReference type="PROSITE" id="PS51689">
    <property type="entry name" value="SAM_RNA_A_N6_MT"/>
    <property type="match status" value="1"/>
</dbReference>
<accession>A8MK56</accession>
<name>RSMA_ALKOO</name>
<proteinExistence type="inferred from homology"/>
<gene>
    <name evidence="1" type="primary">rsmA</name>
    <name evidence="1" type="synonym">ksgA</name>
    <name type="ordered locus">Clos_2657</name>
</gene>
<evidence type="ECO:0000255" key="1">
    <source>
        <dbReference type="HAMAP-Rule" id="MF_00607"/>
    </source>
</evidence>
<organism>
    <name type="scientific">Alkaliphilus oremlandii (strain OhILAs)</name>
    <name type="common">Clostridium oremlandii (strain OhILAs)</name>
    <dbReference type="NCBI Taxonomy" id="350688"/>
    <lineage>
        <taxon>Bacteria</taxon>
        <taxon>Bacillati</taxon>
        <taxon>Bacillota</taxon>
        <taxon>Clostridia</taxon>
        <taxon>Peptostreptococcales</taxon>
        <taxon>Natronincolaceae</taxon>
        <taxon>Alkaliphilus</taxon>
    </lineage>
</organism>
<reference key="1">
    <citation type="submission" date="2007-10" db="EMBL/GenBank/DDBJ databases">
        <title>Complete genome of Alkaliphilus oremlandii OhILAs.</title>
        <authorList>
            <person name="Copeland A."/>
            <person name="Lucas S."/>
            <person name="Lapidus A."/>
            <person name="Barry K."/>
            <person name="Detter J.C."/>
            <person name="Glavina del Rio T."/>
            <person name="Hammon N."/>
            <person name="Israni S."/>
            <person name="Dalin E."/>
            <person name="Tice H."/>
            <person name="Pitluck S."/>
            <person name="Chain P."/>
            <person name="Malfatti S."/>
            <person name="Shin M."/>
            <person name="Vergez L."/>
            <person name="Schmutz J."/>
            <person name="Larimer F."/>
            <person name="Land M."/>
            <person name="Hauser L."/>
            <person name="Kyrpides N."/>
            <person name="Mikhailova N."/>
            <person name="Stolz J.F."/>
            <person name="Dawson A."/>
            <person name="Fisher E."/>
            <person name="Crable B."/>
            <person name="Perera E."/>
            <person name="Lisak J."/>
            <person name="Ranganathan M."/>
            <person name="Basu P."/>
            <person name="Richardson P."/>
        </authorList>
    </citation>
    <scope>NUCLEOTIDE SEQUENCE [LARGE SCALE GENOMIC DNA]</scope>
    <source>
        <strain>OhILAs</strain>
    </source>
</reference>
<keyword id="KW-0963">Cytoplasm</keyword>
<keyword id="KW-0489">Methyltransferase</keyword>
<keyword id="KW-1185">Reference proteome</keyword>
<keyword id="KW-0694">RNA-binding</keyword>
<keyword id="KW-0698">rRNA processing</keyword>
<keyword id="KW-0949">S-adenosyl-L-methionine</keyword>
<keyword id="KW-0808">Transferase</keyword>
<sequence>MDRISSPKKTKEIVQKYEFKFSKSLGQNFLIDQNILDNIVDGANVSEGDCIIEVGPGIGSLTQNIAERADSVLAVEIDKTLIPILKETLGAYPNVEVINEDVLKLDLHKLIEEKFPGRNVKVIANLPYYVTTPIIMKFLEEKVPVKSLTIMIQKEVADRMQAGPGTKDYGALSIAVQYYSNPKILLKVPPSVFIPQPKVESTVIRLDILDTPKVSVEREDLFFSLVKDAFGKRRKTLLNALSTGDLKLEKSLLREVLAASNIDENRRGETLTIEEYGVLANNLAKKL</sequence>
<protein>
    <recommendedName>
        <fullName evidence="1">Ribosomal RNA small subunit methyltransferase A</fullName>
        <ecNumber evidence="1">2.1.1.182</ecNumber>
    </recommendedName>
    <alternativeName>
        <fullName evidence="1">16S rRNA (adenine(1518)-N(6)/adenine(1519)-N(6))-dimethyltransferase</fullName>
    </alternativeName>
    <alternativeName>
        <fullName evidence="1">16S rRNA dimethyladenosine transferase</fullName>
    </alternativeName>
    <alternativeName>
        <fullName evidence="1">16S rRNA dimethylase</fullName>
    </alternativeName>
    <alternativeName>
        <fullName evidence="1">S-adenosylmethionine-6-N', N'-adenosyl(rRNA) dimethyltransferase</fullName>
    </alternativeName>
</protein>
<feature type="chain" id="PRO_1000061278" description="Ribosomal RNA small subunit methyltransferase A">
    <location>
        <begin position="1"/>
        <end position="287"/>
    </location>
</feature>
<feature type="binding site" evidence="1">
    <location>
        <position position="28"/>
    </location>
    <ligand>
        <name>S-adenosyl-L-methionine</name>
        <dbReference type="ChEBI" id="CHEBI:59789"/>
    </ligand>
</feature>
<feature type="binding site" evidence="1">
    <location>
        <position position="30"/>
    </location>
    <ligand>
        <name>S-adenosyl-L-methionine</name>
        <dbReference type="ChEBI" id="CHEBI:59789"/>
    </ligand>
</feature>
<feature type="binding site" evidence="1">
    <location>
        <position position="55"/>
    </location>
    <ligand>
        <name>S-adenosyl-L-methionine</name>
        <dbReference type="ChEBI" id="CHEBI:59789"/>
    </ligand>
</feature>
<feature type="binding site" evidence="1">
    <location>
        <position position="76"/>
    </location>
    <ligand>
        <name>S-adenosyl-L-methionine</name>
        <dbReference type="ChEBI" id="CHEBI:59789"/>
    </ligand>
</feature>
<feature type="binding site" evidence="1">
    <location>
        <position position="101"/>
    </location>
    <ligand>
        <name>S-adenosyl-L-methionine</name>
        <dbReference type="ChEBI" id="CHEBI:59789"/>
    </ligand>
</feature>
<feature type="binding site" evidence="1">
    <location>
        <position position="125"/>
    </location>
    <ligand>
        <name>S-adenosyl-L-methionine</name>
        <dbReference type="ChEBI" id="CHEBI:59789"/>
    </ligand>
</feature>